<evidence type="ECO:0000255" key="1">
    <source>
        <dbReference type="HAMAP-Rule" id="MF_00050"/>
    </source>
</evidence>
<name>EFTS_SYNP6</name>
<dbReference type="EMBL" id="AP008231">
    <property type="protein sequence ID" value="BAD79769.1"/>
    <property type="molecule type" value="Genomic_DNA"/>
</dbReference>
<dbReference type="RefSeq" id="WP_011243889.1">
    <property type="nucleotide sequence ID" value="NZ_CP085785.1"/>
</dbReference>
<dbReference type="SMR" id="Q5N1Q1"/>
<dbReference type="GeneID" id="72431422"/>
<dbReference type="KEGG" id="syc:syc1579_c"/>
<dbReference type="eggNOG" id="COG0264">
    <property type="taxonomic scope" value="Bacteria"/>
</dbReference>
<dbReference type="Proteomes" id="UP000001175">
    <property type="component" value="Chromosome"/>
</dbReference>
<dbReference type="GO" id="GO:0005737">
    <property type="term" value="C:cytoplasm"/>
    <property type="evidence" value="ECO:0007669"/>
    <property type="project" value="UniProtKB-SubCell"/>
</dbReference>
<dbReference type="GO" id="GO:0003746">
    <property type="term" value="F:translation elongation factor activity"/>
    <property type="evidence" value="ECO:0007669"/>
    <property type="project" value="UniProtKB-UniRule"/>
</dbReference>
<dbReference type="CDD" id="cd14275">
    <property type="entry name" value="UBA_EF-Ts"/>
    <property type="match status" value="1"/>
</dbReference>
<dbReference type="FunFam" id="1.10.286.20:FF:000001">
    <property type="entry name" value="Elongation factor Ts"/>
    <property type="match status" value="1"/>
</dbReference>
<dbReference type="FunFam" id="1.10.8.10:FF:000001">
    <property type="entry name" value="Elongation factor Ts"/>
    <property type="match status" value="1"/>
</dbReference>
<dbReference type="Gene3D" id="1.10.286.20">
    <property type="match status" value="1"/>
</dbReference>
<dbReference type="Gene3D" id="1.10.8.10">
    <property type="entry name" value="DNA helicase RuvA subunit, C-terminal domain"/>
    <property type="match status" value="1"/>
</dbReference>
<dbReference type="Gene3D" id="3.30.479.20">
    <property type="entry name" value="Elongation factor Ts, dimerisation domain"/>
    <property type="match status" value="1"/>
</dbReference>
<dbReference type="HAMAP" id="MF_00050">
    <property type="entry name" value="EF_Ts"/>
    <property type="match status" value="1"/>
</dbReference>
<dbReference type="InterPro" id="IPR036402">
    <property type="entry name" value="EF-Ts_dimer_sf"/>
</dbReference>
<dbReference type="InterPro" id="IPR001816">
    <property type="entry name" value="Transl_elong_EFTs/EF1B"/>
</dbReference>
<dbReference type="InterPro" id="IPR014039">
    <property type="entry name" value="Transl_elong_EFTs/EF1B_dimer"/>
</dbReference>
<dbReference type="InterPro" id="IPR018101">
    <property type="entry name" value="Transl_elong_Ts_CS"/>
</dbReference>
<dbReference type="InterPro" id="IPR009060">
    <property type="entry name" value="UBA-like_sf"/>
</dbReference>
<dbReference type="NCBIfam" id="TIGR00116">
    <property type="entry name" value="tsf"/>
    <property type="match status" value="2"/>
</dbReference>
<dbReference type="PANTHER" id="PTHR11741">
    <property type="entry name" value="ELONGATION FACTOR TS"/>
    <property type="match status" value="1"/>
</dbReference>
<dbReference type="PANTHER" id="PTHR11741:SF10">
    <property type="entry name" value="POLYPROTEIN OF EF-TS, CHLOROPLASTIC"/>
    <property type="match status" value="1"/>
</dbReference>
<dbReference type="Pfam" id="PF25025">
    <property type="entry name" value="EF-Ts_N"/>
    <property type="match status" value="1"/>
</dbReference>
<dbReference type="Pfam" id="PF00889">
    <property type="entry name" value="EF_TS"/>
    <property type="match status" value="1"/>
</dbReference>
<dbReference type="SUPFAM" id="SSF54713">
    <property type="entry name" value="Elongation factor Ts (EF-Ts), dimerisation domain"/>
    <property type="match status" value="1"/>
</dbReference>
<dbReference type="SUPFAM" id="SSF46934">
    <property type="entry name" value="UBA-like"/>
    <property type="match status" value="1"/>
</dbReference>
<dbReference type="PROSITE" id="PS01126">
    <property type="entry name" value="EF_TS_1"/>
    <property type="match status" value="1"/>
</dbReference>
<dbReference type="PROSITE" id="PS01127">
    <property type="entry name" value="EF_TS_2"/>
    <property type="match status" value="1"/>
</dbReference>
<reference key="1">
    <citation type="journal article" date="2007" name="Photosyn. Res.">
        <title>Complete nucleotide sequence of the freshwater unicellular cyanobacterium Synechococcus elongatus PCC 6301 chromosome: gene content and organization.</title>
        <authorList>
            <person name="Sugita C."/>
            <person name="Ogata K."/>
            <person name="Shikata M."/>
            <person name="Jikuya H."/>
            <person name="Takano J."/>
            <person name="Furumichi M."/>
            <person name="Kanehisa M."/>
            <person name="Omata T."/>
            <person name="Sugiura M."/>
            <person name="Sugita M."/>
        </authorList>
    </citation>
    <scope>NUCLEOTIDE SEQUENCE [LARGE SCALE GENOMIC DNA]</scope>
    <source>
        <strain>ATCC 27144 / PCC 6301 / SAUG 1402/1</strain>
    </source>
</reference>
<proteinExistence type="inferred from homology"/>
<comment type="function">
    <text evidence="1">Associates with the EF-Tu.GDP complex and induces the exchange of GDP to GTP. It remains bound to the aminoacyl-tRNA.EF-Tu.GTP complex up to the GTP hydrolysis stage on the ribosome.</text>
</comment>
<comment type="subcellular location">
    <subcellularLocation>
        <location evidence="1">Cytoplasm</location>
    </subcellularLocation>
</comment>
<comment type="similarity">
    <text evidence="1">Belongs to the EF-Ts family.</text>
</comment>
<protein>
    <recommendedName>
        <fullName evidence="1">Elongation factor Ts</fullName>
        <shortName evidence="1">EF-Ts</shortName>
    </recommendedName>
</protein>
<organism>
    <name type="scientific">Synechococcus sp. (strain ATCC 27144 / PCC 6301 / SAUG 1402/1)</name>
    <name type="common">Anacystis nidulans</name>
    <dbReference type="NCBI Taxonomy" id="269084"/>
    <lineage>
        <taxon>Bacteria</taxon>
        <taxon>Bacillati</taxon>
        <taxon>Cyanobacteriota</taxon>
        <taxon>Cyanophyceae</taxon>
        <taxon>Synechococcales</taxon>
        <taxon>Synechococcaceae</taxon>
        <taxon>Synechococcus</taxon>
    </lineage>
</organism>
<accession>Q5N1Q1</accession>
<feature type="chain" id="PRO_0000161217" description="Elongation factor Ts">
    <location>
        <begin position="1"/>
        <end position="221"/>
    </location>
</feature>
<feature type="region of interest" description="Involved in Mg(2+) ion dislocation from EF-Tu" evidence="1">
    <location>
        <begin position="82"/>
        <end position="85"/>
    </location>
</feature>
<gene>
    <name evidence="1" type="primary">tsf</name>
    <name type="ordered locus">syc1579_c</name>
</gene>
<sequence length="221" mass="24282">MAEISAKLVKELREKTGAGMMDCKKALNENDGDLQKAIEWLRQKGIASAEKKSGRTAAEGLVGSYIHTGGRVGVLVEVNCETDFVARGDKFQELVRSIAMQIAACPNVEFVKVEDIPAEIAEREKAIEMGRDDLANKPENIREKIVVGRIEKRLKELTLLDQPYIRDPNISVAELVKQSIAELGENIQVRRFTRFVLGEGIEKAESDFAAEVAAQAAAAQS</sequence>
<keyword id="KW-0963">Cytoplasm</keyword>
<keyword id="KW-0251">Elongation factor</keyword>
<keyword id="KW-0648">Protein biosynthesis</keyword>